<comment type="function">
    <text evidence="1">May play a role in DNA repair. It seems to be involved in an RecBC-independent recombinational process of DNA repair. It may act with RecF and RecO.</text>
</comment>
<comment type="similarity">
    <text evidence="1">Belongs to the RecR family.</text>
</comment>
<evidence type="ECO:0000255" key="1">
    <source>
        <dbReference type="HAMAP-Rule" id="MF_00017"/>
    </source>
</evidence>
<gene>
    <name evidence="1" type="primary">recR</name>
    <name type="ordered locus">CLM_0039</name>
</gene>
<proteinExistence type="inferred from homology"/>
<feature type="chain" id="PRO_1000195373" description="Recombination protein RecR">
    <location>
        <begin position="1"/>
        <end position="198"/>
    </location>
</feature>
<feature type="domain" description="Toprim" evidence="1">
    <location>
        <begin position="81"/>
        <end position="175"/>
    </location>
</feature>
<feature type="zinc finger region" description="C4-type" evidence="1">
    <location>
        <begin position="58"/>
        <end position="73"/>
    </location>
</feature>
<name>RECR_CLOBJ</name>
<dbReference type="EMBL" id="CP001581">
    <property type="protein sequence ID" value="ACO86047.1"/>
    <property type="molecule type" value="Genomic_DNA"/>
</dbReference>
<dbReference type="RefSeq" id="WP_003359478.1">
    <property type="nucleotide sequence ID" value="NC_012563.1"/>
</dbReference>
<dbReference type="SMR" id="C1FPJ6"/>
<dbReference type="GeneID" id="5187947"/>
<dbReference type="KEGG" id="cby:CLM_0039"/>
<dbReference type="eggNOG" id="COG0353">
    <property type="taxonomic scope" value="Bacteria"/>
</dbReference>
<dbReference type="HOGENOM" id="CLU_060739_1_0_9"/>
<dbReference type="Proteomes" id="UP000001374">
    <property type="component" value="Chromosome"/>
</dbReference>
<dbReference type="GO" id="GO:0003677">
    <property type="term" value="F:DNA binding"/>
    <property type="evidence" value="ECO:0007669"/>
    <property type="project" value="UniProtKB-UniRule"/>
</dbReference>
<dbReference type="GO" id="GO:0008270">
    <property type="term" value="F:zinc ion binding"/>
    <property type="evidence" value="ECO:0007669"/>
    <property type="project" value="UniProtKB-KW"/>
</dbReference>
<dbReference type="GO" id="GO:0006310">
    <property type="term" value="P:DNA recombination"/>
    <property type="evidence" value="ECO:0007669"/>
    <property type="project" value="UniProtKB-UniRule"/>
</dbReference>
<dbReference type="GO" id="GO:0006281">
    <property type="term" value="P:DNA repair"/>
    <property type="evidence" value="ECO:0007669"/>
    <property type="project" value="UniProtKB-UniRule"/>
</dbReference>
<dbReference type="CDD" id="cd01025">
    <property type="entry name" value="TOPRIM_recR"/>
    <property type="match status" value="1"/>
</dbReference>
<dbReference type="Gene3D" id="3.30.60.80">
    <property type="match status" value="1"/>
</dbReference>
<dbReference type="Gene3D" id="3.40.1360.10">
    <property type="match status" value="1"/>
</dbReference>
<dbReference type="Gene3D" id="6.10.250.240">
    <property type="match status" value="1"/>
</dbReference>
<dbReference type="Gene3D" id="1.10.8.420">
    <property type="entry name" value="RecR Domain 1"/>
    <property type="match status" value="1"/>
</dbReference>
<dbReference type="HAMAP" id="MF_00017">
    <property type="entry name" value="RecR"/>
    <property type="match status" value="1"/>
</dbReference>
<dbReference type="InterPro" id="IPR000093">
    <property type="entry name" value="DNA_Rcmb_RecR"/>
</dbReference>
<dbReference type="InterPro" id="IPR023627">
    <property type="entry name" value="Rcmb_RecR"/>
</dbReference>
<dbReference type="InterPro" id="IPR015967">
    <property type="entry name" value="Rcmb_RecR_Znf"/>
</dbReference>
<dbReference type="InterPro" id="IPR006171">
    <property type="entry name" value="TOPRIM_dom"/>
</dbReference>
<dbReference type="InterPro" id="IPR034137">
    <property type="entry name" value="TOPRIM_RecR"/>
</dbReference>
<dbReference type="NCBIfam" id="TIGR00615">
    <property type="entry name" value="recR"/>
    <property type="match status" value="1"/>
</dbReference>
<dbReference type="PANTHER" id="PTHR30446">
    <property type="entry name" value="RECOMBINATION PROTEIN RECR"/>
    <property type="match status" value="1"/>
</dbReference>
<dbReference type="PANTHER" id="PTHR30446:SF0">
    <property type="entry name" value="RECOMBINATION PROTEIN RECR"/>
    <property type="match status" value="1"/>
</dbReference>
<dbReference type="Pfam" id="PF21175">
    <property type="entry name" value="RecR_C"/>
    <property type="match status" value="1"/>
</dbReference>
<dbReference type="Pfam" id="PF21176">
    <property type="entry name" value="RecR_HhH"/>
    <property type="match status" value="1"/>
</dbReference>
<dbReference type="Pfam" id="PF02132">
    <property type="entry name" value="RecR_ZnF"/>
    <property type="match status" value="1"/>
</dbReference>
<dbReference type="Pfam" id="PF13662">
    <property type="entry name" value="Toprim_4"/>
    <property type="match status" value="1"/>
</dbReference>
<dbReference type="SMART" id="SM00493">
    <property type="entry name" value="TOPRIM"/>
    <property type="match status" value="1"/>
</dbReference>
<dbReference type="SUPFAM" id="SSF111304">
    <property type="entry name" value="Recombination protein RecR"/>
    <property type="match status" value="1"/>
</dbReference>
<dbReference type="PROSITE" id="PS01300">
    <property type="entry name" value="RECR"/>
    <property type="match status" value="1"/>
</dbReference>
<dbReference type="PROSITE" id="PS50880">
    <property type="entry name" value="TOPRIM"/>
    <property type="match status" value="1"/>
</dbReference>
<protein>
    <recommendedName>
        <fullName evidence="1">Recombination protein RecR</fullName>
    </recommendedName>
</protein>
<accession>C1FPJ6</accession>
<organism>
    <name type="scientific">Clostridium botulinum (strain Kyoto / Type A2)</name>
    <dbReference type="NCBI Taxonomy" id="536232"/>
    <lineage>
        <taxon>Bacteria</taxon>
        <taxon>Bacillati</taxon>
        <taxon>Bacillota</taxon>
        <taxon>Clostridia</taxon>
        <taxon>Eubacteriales</taxon>
        <taxon>Clostridiaceae</taxon>
        <taxon>Clostridium</taxon>
    </lineage>
</organism>
<keyword id="KW-0227">DNA damage</keyword>
<keyword id="KW-0233">DNA recombination</keyword>
<keyword id="KW-0234">DNA repair</keyword>
<keyword id="KW-0479">Metal-binding</keyword>
<keyword id="KW-0862">Zinc</keyword>
<keyword id="KW-0863">Zinc-finger</keyword>
<sequence>MDFYPIAIEKLIEEFAKLPGIGYKTAQRLTLYVLNLPKEEVKEFSEALVKARGTIKYCSVCGNFTDKDPCAICSNPNRNKSIICVIEQPKDIMSMEKIREYNGVYHVLHGNISPMAGRGPEDIKLKELIRRIDGSVNEVIVATNPNVEGEATAMYISKILKPLGVKVTRIAHGVPVGGDLEYADEVTLAKALEGRIEL</sequence>
<reference key="1">
    <citation type="submission" date="2008-10" db="EMBL/GenBank/DDBJ databases">
        <title>Genome sequence of Clostridium botulinum A2 Kyoto.</title>
        <authorList>
            <person name="Shrivastava S."/>
            <person name="Brinkac L.M."/>
            <person name="Brown J.L."/>
            <person name="Bruce D."/>
            <person name="Detter C.C."/>
            <person name="Johnson E.A."/>
            <person name="Munk C.A."/>
            <person name="Smith L.A."/>
            <person name="Smith T.J."/>
            <person name="Sutton G."/>
            <person name="Brettin T.S."/>
        </authorList>
    </citation>
    <scope>NUCLEOTIDE SEQUENCE [LARGE SCALE GENOMIC DNA]</scope>
    <source>
        <strain>Kyoto / Type A2</strain>
    </source>
</reference>